<feature type="chain" id="PRO_0000168961" description="Protein YdfW">
    <location>
        <begin position="1"/>
        <end position="49"/>
    </location>
</feature>
<feature type="region of interest" description="Disordered" evidence="1">
    <location>
        <begin position="16"/>
        <end position="49"/>
    </location>
</feature>
<protein>
    <recommendedName>
        <fullName evidence="3">Protein YdfW</fullName>
    </recommendedName>
</protein>
<proteinExistence type="predicted"/>
<name>YDFW_ECOLI</name>
<gene>
    <name type="primary">ydfW</name>
    <name type="synonym">intK</name>
    <name type="ordered locus">b1567</name>
    <name type="ordered locus">JW1559</name>
</gene>
<comment type="function">
    <text evidence="2">May be involved in H(2) production during fermentative growth.</text>
</comment>
<comment type="disruption phenotype">
    <text evidence="2">Loss of H(2) production on minimal glucose, complex glucose and complex formate medium. Alters production of organic acids when grown on minimal glucose medium. This phenotype was not complemented by reintroduction of the ydfW gene.</text>
</comment>
<comment type="miscellaneous">
    <text>Encoded in the Qin prophage region. It is missing about 390 N-terminal residues compared to orthologs.</text>
</comment>
<accession>P76164</accession>
<accession>A0A385XJI5</accession>
<accession>Q2MB83</accession>
<evidence type="ECO:0000256" key="1">
    <source>
        <dbReference type="SAM" id="MobiDB-lite"/>
    </source>
</evidence>
<evidence type="ECO:0000269" key="2">
    <source>
    </source>
</evidence>
<evidence type="ECO:0000305" key="3"/>
<reference key="1">
    <citation type="journal article" date="1997" name="Science">
        <title>The complete genome sequence of Escherichia coli K-12.</title>
        <authorList>
            <person name="Blattner F.R."/>
            <person name="Plunkett G. III"/>
            <person name="Bloch C.A."/>
            <person name="Perna N.T."/>
            <person name="Burland V."/>
            <person name="Riley M."/>
            <person name="Collado-Vides J."/>
            <person name="Glasner J.D."/>
            <person name="Rode C.K."/>
            <person name="Mayhew G.F."/>
            <person name="Gregor J."/>
            <person name="Davis N.W."/>
            <person name="Kirkpatrick H.A."/>
            <person name="Goeden M.A."/>
            <person name="Rose D.J."/>
            <person name="Mau B."/>
            <person name="Shao Y."/>
        </authorList>
    </citation>
    <scope>NUCLEOTIDE SEQUENCE [LARGE SCALE GENOMIC DNA]</scope>
    <source>
        <strain>K12 / MG1655 / ATCC 47076</strain>
    </source>
</reference>
<reference key="2">
    <citation type="submission" date="2007-04" db="EMBL/GenBank/DDBJ databases">
        <authorList>
            <person name="Plunkett G. III"/>
        </authorList>
    </citation>
    <scope>SEQUENCE REVISION</scope>
    <source>
        <strain>K12 / MG1655 / ATCC 47076</strain>
    </source>
</reference>
<reference key="3">
    <citation type="journal article" date="2006" name="Mol. Syst. Biol.">
        <title>Highly accurate genome sequences of Escherichia coli K-12 strains MG1655 and W3110.</title>
        <authorList>
            <person name="Hayashi K."/>
            <person name="Morooka N."/>
            <person name="Yamamoto Y."/>
            <person name="Fujita K."/>
            <person name="Isono K."/>
            <person name="Choi S."/>
            <person name="Ohtsubo E."/>
            <person name="Baba T."/>
            <person name="Wanner B.L."/>
            <person name="Mori H."/>
            <person name="Horiuchi T."/>
        </authorList>
    </citation>
    <scope>NUCLEOTIDE SEQUENCE [LARGE SCALE GENOMIC DNA]</scope>
    <source>
        <strain>K12 / W3110 / ATCC 27325 / DSM 5911</strain>
    </source>
</reference>
<reference key="4">
    <citation type="journal article" date="2013" name="Biochem. Biophys. Res. Commun.">
        <title>Four products from Escherichia coli pseudogenes increase hydrogen production.</title>
        <authorList>
            <person name="Mohd Yusoff M.Z."/>
            <person name="Hashiguchi Y."/>
            <person name="Maeda T."/>
            <person name="Wood T.K."/>
        </authorList>
    </citation>
    <scope>FUNCTION</scope>
    <scope>DISRUPTION PHENOTYPE</scope>
    <source>
        <strain>K12 / BW25113</strain>
    </source>
</reference>
<keyword id="KW-1185">Reference proteome</keyword>
<dbReference type="EMBL" id="U00096">
    <property type="protein sequence ID" value="AYC08220.1"/>
    <property type="molecule type" value="Genomic_DNA"/>
</dbReference>
<dbReference type="EMBL" id="AP009048">
    <property type="protein sequence ID" value="BAE76473.1"/>
    <property type="molecule type" value="Genomic_DNA"/>
</dbReference>
<dbReference type="PIR" id="B64912">
    <property type="entry name" value="B64912"/>
</dbReference>
<dbReference type="BioGRID" id="4260699">
    <property type="interactions" value="99"/>
</dbReference>
<dbReference type="FunCoup" id="P76164">
    <property type="interactions" value="195"/>
</dbReference>
<dbReference type="IntAct" id="P76164">
    <property type="interactions" value="2"/>
</dbReference>
<dbReference type="ChEMBL" id="CHEMBL3309034"/>
<dbReference type="EnsemblBacteria" id="AYC08220">
    <property type="protein sequence ID" value="AYC08220"/>
    <property type="gene ID" value="b1567"/>
</dbReference>
<dbReference type="KEGG" id="ecj:JW1559"/>
<dbReference type="EchoBASE" id="EB3596"/>
<dbReference type="eggNOG" id="COG2801">
    <property type="taxonomic scope" value="Bacteria"/>
</dbReference>
<dbReference type="HOGENOM" id="CLU_3135051_0_0_6"/>
<dbReference type="InParanoid" id="P76164"/>
<dbReference type="OrthoDB" id="5655881at2"/>
<dbReference type="BioCyc" id="EcoCyc:G6834-MONOMER"/>
<dbReference type="PRO" id="PR:P76164"/>
<dbReference type="Proteomes" id="UP000000625">
    <property type="component" value="Chromosome"/>
</dbReference>
<organism>
    <name type="scientific">Escherichia coli (strain K12)</name>
    <dbReference type="NCBI Taxonomy" id="83333"/>
    <lineage>
        <taxon>Bacteria</taxon>
        <taxon>Pseudomonadati</taxon>
        <taxon>Pseudomonadota</taxon>
        <taxon>Gammaproteobacteria</taxon>
        <taxon>Enterobacterales</taxon>
        <taxon>Enterobacteriaceae</taxon>
        <taxon>Escherichia</taxon>
    </lineage>
</organism>
<sequence length="49" mass="5881">MDNARIDLRSKYYVKPKADHPWLTRRTQSHQQVKPPKLPKKKPDPDKKD</sequence>